<organism>
    <name type="scientific">Magnetococcus marinus (strain ATCC BAA-1437 / JCM 17883 / MC-1)</name>
    <dbReference type="NCBI Taxonomy" id="156889"/>
    <lineage>
        <taxon>Bacteria</taxon>
        <taxon>Pseudomonadati</taxon>
        <taxon>Pseudomonadota</taxon>
        <taxon>Alphaproteobacteria</taxon>
        <taxon>Magnetococcales</taxon>
        <taxon>Magnetococcaceae</taxon>
        <taxon>Magnetococcus</taxon>
    </lineage>
</organism>
<dbReference type="EC" id="6.3.2.4" evidence="2"/>
<dbReference type="EMBL" id="CP000471">
    <property type="protein sequence ID" value="ABK43271.1"/>
    <property type="molecule type" value="Genomic_DNA"/>
</dbReference>
<dbReference type="RefSeq" id="WP_011712431.1">
    <property type="nucleotide sequence ID" value="NC_008576.1"/>
</dbReference>
<dbReference type="SMR" id="A0L5M8"/>
<dbReference type="STRING" id="156889.Mmc1_0750"/>
<dbReference type="KEGG" id="mgm:Mmc1_0750"/>
<dbReference type="eggNOG" id="COG1181">
    <property type="taxonomic scope" value="Bacteria"/>
</dbReference>
<dbReference type="HOGENOM" id="CLU_039268_2_0_5"/>
<dbReference type="OrthoDB" id="9813261at2"/>
<dbReference type="UniPathway" id="UPA00219"/>
<dbReference type="Proteomes" id="UP000002586">
    <property type="component" value="Chromosome"/>
</dbReference>
<dbReference type="GO" id="GO:0005737">
    <property type="term" value="C:cytoplasm"/>
    <property type="evidence" value="ECO:0007669"/>
    <property type="project" value="UniProtKB-SubCell"/>
</dbReference>
<dbReference type="GO" id="GO:0005524">
    <property type="term" value="F:ATP binding"/>
    <property type="evidence" value="ECO:0007669"/>
    <property type="project" value="UniProtKB-KW"/>
</dbReference>
<dbReference type="GO" id="GO:0008716">
    <property type="term" value="F:D-alanine-D-alanine ligase activity"/>
    <property type="evidence" value="ECO:0007669"/>
    <property type="project" value="UniProtKB-UniRule"/>
</dbReference>
<dbReference type="GO" id="GO:0046872">
    <property type="term" value="F:metal ion binding"/>
    <property type="evidence" value="ECO:0007669"/>
    <property type="project" value="UniProtKB-KW"/>
</dbReference>
<dbReference type="GO" id="GO:0071555">
    <property type="term" value="P:cell wall organization"/>
    <property type="evidence" value="ECO:0007669"/>
    <property type="project" value="UniProtKB-KW"/>
</dbReference>
<dbReference type="GO" id="GO:0009252">
    <property type="term" value="P:peptidoglycan biosynthetic process"/>
    <property type="evidence" value="ECO:0007669"/>
    <property type="project" value="UniProtKB-UniRule"/>
</dbReference>
<dbReference type="GO" id="GO:0008360">
    <property type="term" value="P:regulation of cell shape"/>
    <property type="evidence" value="ECO:0007669"/>
    <property type="project" value="UniProtKB-KW"/>
</dbReference>
<dbReference type="Gene3D" id="3.40.50.20">
    <property type="match status" value="1"/>
</dbReference>
<dbReference type="Gene3D" id="3.30.1490.20">
    <property type="entry name" value="ATP-grasp fold, A domain"/>
    <property type="match status" value="1"/>
</dbReference>
<dbReference type="Gene3D" id="3.30.470.20">
    <property type="entry name" value="ATP-grasp fold, B domain"/>
    <property type="match status" value="1"/>
</dbReference>
<dbReference type="HAMAP" id="MF_00047">
    <property type="entry name" value="Dala_Dala_lig"/>
    <property type="match status" value="1"/>
</dbReference>
<dbReference type="InterPro" id="IPR011761">
    <property type="entry name" value="ATP-grasp"/>
</dbReference>
<dbReference type="InterPro" id="IPR013815">
    <property type="entry name" value="ATP_grasp_subdomain_1"/>
</dbReference>
<dbReference type="InterPro" id="IPR000291">
    <property type="entry name" value="D-Ala_lig_Van_CS"/>
</dbReference>
<dbReference type="InterPro" id="IPR005905">
    <property type="entry name" value="D_ala_D_ala"/>
</dbReference>
<dbReference type="InterPro" id="IPR011095">
    <property type="entry name" value="Dala_Dala_lig_C"/>
</dbReference>
<dbReference type="InterPro" id="IPR011127">
    <property type="entry name" value="Dala_Dala_lig_N"/>
</dbReference>
<dbReference type="InterPro" id="IPR016185">
    <property type="entry name" value="PreATP-grasp_dom_sf"/>
</dbReference>
<dbReference type="NCBIfam" id="TIGR01205">
    <property type="entry name" value="D_ala_D_alaTIGR"/>
    <property type="match status" value="1"/>
</dbReference>
<dbReference type="NCBIfam" id="NF002378">
    <property type="entry name" value="PRK01372.1"/>
    <property type="match status" value="1"/>
</dbReference>
<dbReference type="PANTHER" id="PTHR23132">
    <property type="entry name" value="D-ALANINE--D-ALANINE LIGASE"/>
    <property type="match status" value="1"/>
</dbReference>
<dbReference type="PANTHER" id="PTHR23132:SF23">
    <property type="entry name" value="D-ALANINE--D-ALANINE LIGASE B"/>
    <property type="match status" value="1"/>
</dbReference>
<dbReference type="Pfam" id="PF07478">
    <property type="entry name" value="Dala_Dala_lig_C"/>
    <property type="match status" value="1"/>
</dbReference>
<dbReference type="Pfam" id="PF01820">
    <property type="entry name" value="Dala_Dala_lig_N"/>
    <property type="match status" value="1"/>
</dbReference>
<dbReference type="PIRSF" id="PIRSF039102">
    <property type="entry name" value="Ddl/VanB"/>
    <property type="match status" value="1"/>
</dbReference>
<dbReference type="SUPFAM" id="SSF56059">
    <property type="entry name" value="Glutathione synthetase ATP-binding domain-like"/>
    <property type="match status" value="1"/>
</dbReference>
<dbReference type="SUPFAM" id="SSF52440">
    <property type="entry name" value="PreATP-grasp domain"/>
    <property type="match status" value="1"/>
</dbReference>
<dbReference type="PROSITE" id="PS50975">
    <property type="entry name" value="ATP_GRASP"/>
    <property type="match status" value="1"/>
</dbReference>
<dbReference type="PROSITE" id="PS00843">
    <property type="entry name" value="DALA_DALA_LIGASE_1"/>
    <property type="match status" value="1"/>
</dbReference>
<dbReference type="PROSITE" id="PS00844">
    <property type="entry name" value="DALA_DALA_LIGASE_2"/>
    <property type="match status" value="1"/>
</dbReference>
<comment type="function">
    <text evidence="2">Cell wall formation.</text>
</comment>
<comment type="catalytic activity">
    <reaction evidence="2">
        <text>2 D-alanine + ATP = D-alanyl-D-alanine + ADP + phosphate + H(+)</text>
        <dbReference type="Rhea" id="RHEA:11224"/>
        <dbReference type="ChEBI" id="CHEBI:15378"/>
        <dbReference type="ChEBI" id="CHEBI:30616"/>
        <dbReference type="ChEBI" id="CHEBI:43474"/>
        <dbReference type="ChEBI" id="CHEBI:57416"/>
        <dbReference type="ChEBI" id="CHEBI:57822"/>
        <dbReference type="ChEBI" id="CHEBI:456216"/>
        <dbReference type="EC" id="6.3.2.4"/>
    </reaction>
</comment>
<comment type="cofactor">
    <cofactor evidence="1">
        <name>Mg(2+)</name>
        <dbReference type="ChEBI" id="CHEBI:18420"/>
    </cofactor>
    <cofactor evidence="1">
        <name>Mn(2+)</name>
        <dbReference type="ChEBI" id="CHEBI:29035"/>
    </cofactor>
    <text evidence="1">Binds 2 magnesium or manganese ions per subunit.</text>
</comment>
<comment type="pathway">
    <text evidence="2">Cell wall biogenesis; peptidoglycan biosynthesis.</text>
</comment>
<comment type="subcellular location">
    <subcellularLocation>
        <location evidence="2">Cytoplasm</location>
    </subcellularLocation>
</comment>
<comment type="similarity">
    <text evidence="2">Belongs to the D-alanine--D-alanine ligase family.</text>
</comment>
<sequence>MDWKQKKIGVLYGGLSEEREVSLRSGQALFVALQSLGYQVVAIDVDRHITKVLEREGIEVAVLALHGPMGEDGTIQGLLEFMGIPYTGPNVAASAICMDKGLSKRLFHSEGLPTPAWIELAGDHEEADELVDHFLGDFHGAAFVKPLDSGSSVGISRAVGKDELIRGVAKALSVSHRCMVERAIEGRELTLSILDGEAFPLIEIVPIDGFYDYDHKYTAGRTNYLVPAPNLDDKSLEAVVKIGLAAYHITGCRGLVRADFILDGEGTPWLLELNTIPGMTELSLAPKAAHAVGIEMPQLAERILQGARLK</sequence>
<accession>A0L5M8</accession>
<gene>
    <name evidence="2" type="primary">ddl</name>
    <name type="ordered locus">Mmc1_0750</name>
</gene>
<protein>
    <recommendedName>
        <fullName evidence="2">D-alanine--D-alanine ligase</fullName>
        <ecNumber evidence="2">6.3.2.4</ecNumber>
    </recommendedName>
    <alternativeName>
        <fullName evidence="2">D-Ala-D-Ala ligase</fullName>
    </alternativeName>
    <alternativeName>
        <fullName evidence="2">D-alanylalanine synthetase</fullName>
    </alternativeName>
</protein>
<proteinExistence type="inferred from homology"/>
<evidence type="ECO:0000250" key="1"/>
<evidence type="ECO:0000255" key="2">
    <source>
        <dbReference type="HAMAP-Rule" id="MF_00047"/>
    </source>
</evidence>
<keyword id="KW-0067">ATP-binding</keyword>
<keyword id="KW-0133">Cell shape</keyword>
<keyword id="KW-0961">Cell wall biogenesis/degradation</keyword>
<keyword id="KW-0963">Cytoplasm</keyword>
<keyword id="KW-0436">Ligase</keyword>
<keyword id="KW-0460">Magnesium</keyword>
<keyword id="KW-0464">Manganese</keyword>
<keyword id="KW-0479">Metal-binding</keyword>
<keyword id="KW-0547">Nucleotide-binding</keyword>
<keyword id="KW-0573">Peptidoglycan synthesis</keyword>
<keyword id="KW-1185">Reference proteome</keyword>
<feature type="chain" id="PRO_1000030465" description="D-alanine--D-alanine ligase">
    <location>
        <begin position="1"/>
        <end position="310"/>
    </location>
</feature>
<feature type="domain" description="ATP-grasp" evidence="2">
    <location>
        <begin position="104"/>
        <end position="305"/>
    </location>
</feature>
<feature type="binding site" evidence="2">
    <location>
        <begin position="135"/>
        <end position="190"/>
    </location>
    <ligand>
        <name>ATP</name>
        <dbReference type="ChEBI" id="CHEBI:30616"/>
    </ligand>
</feature>
<feature type="binding site" evidence="2">
    <location>
        <position position="259"/>
    </location>
    <ligand>
        <name>Mg(2+)</name>
        <dbReference type="ChEBI" id="CHEBI:18420"/>
        <label>1</label>
    </ligand>
</feature>
<feature type="binding site" evidence="2">
    <location>
        <position position="272"/>
    </location>
    <ligand>
        <name>Mg(2+)</name>
        <dbReference type="ChEBI" id="CHEBI:18420"/>
        <label>1</label>
    </ligand>
</feature>
<feature type="binding site" evidence="2">
    <location>
        <position position="272"/>
    </location>
    <ligand>
        <name>Mg(2+)</name>
        <dbReference type="ChEBI" id="CHEBI:18420"/>
        <label>2</label>
    </ligand>
</feature>
<feature type="binding site" evidence="2">
    <location>
        <position position="274"/>
    </location>
    <ligand>
        <name>Mg(2+)</name>
        <dbReference type="ChEBI" id="CHEBI:18420"/>
        <label>2</label>
    </ligand>
</feature>
<reference key="1">
    <citation type="journal article" date="2009" name="Appl. Environ. Microbiol.">
        <title>Complete genome sequence of the chemolithoautotrophic marine magnetotactic coccus strain MC-1.</title>
        <authorList>
            <person name="Schubbe S."/>
            <person name="Williams T.J."/>
            <person name="Xie G."/>
            <person name="Kiss H.E."/>
            <person name="Brettin T.S."/>
            <person name="Martinez D."/>
            <person name="Ross C.A."/>
            <person name="Schuler D."/>
            <person name="Cox B.L."/>
            <person name="Nealson K.H."/>
            <person name="Bazylinski D.A."/>
        </authorList>
    </citation>
    <scope>NUCLEOTIDE SEQUENCE [LARGE SCALE GENOMIC DNA]</scope>
    <source>
        <strain>ATCC BAA-1437 / JCM 17883 / MC-1</strain>
    </source>
</reference>
<name>DDL_MAGMM</name>